<evidence type="ECO:0000255" key="1">
    <source>
        <dbReference type="HAMAP-Rule" id="MF_01013"/>
    </source>
</evidence>
<proteinExistence type="inferred from homology"/>
<sequence>MLSKRIIPCLDCDLQVPEGRVVKGVEFKQIRYAGNPVELATKYYEQGADEIVFLDITASHERRSTMADVIEKTVENVFTPICVGGGIREVKDYVAMLKAGADKCSTNTAAIKDPSLINRASEHVGSQACVIGIDAKRRYVENPSESDEHYIVETNDGYCWFDCSIYGGREFTGIDAVKWAIECEERGAGEILLTSMDRDGTKIGYDLELTKTISENVSIPVIASGGVGNPEHIYDSFSKGKADAALAASIFHFDEYPIPQVKNYLKDKNIPIRI</sequence>
<reference key="1">
    <citation type="journal article" date="2006" name="J. Bacteriol.">
        <title>The genome sequence of Methanosphaera stadtmanae reveals why this human intestinal archaeon is restricted to methanol and H2 for methane formation and ATP synthesis.</title>
        <authorList>
            <person name="Fricke W.F."/>
            <person name="Seedorf H."/>
            <person name="Henne A."/>
            <person name="Kruer M."/>
            <person name="Liesegang H."/>
            <person name="Hedderich R."/>
            <person name="Gottschalk G."/>
            <person name="Thauer R.K."/>
        </authorList>
    </citation>
    <scope>NUCLEOTIDE SEQUENCE [LARGE SCALE GENOMIC DNA]</scope>
    <source>
        <strain>ATCC 43021 / DSM 3091 / JCM 11832 / MCB-3</strain>
    </source>
</reference>
<feature type="chain" id="PRO_1000063090" description="Imidazole glycerol phosphate synthase subunit HisF">
    <location>
        <begin position="1"/>
        <end position="274"/>
    </location>
</feature>
<feature type="active site" evidence="1">
    <location>
        <position position="11"/>
    </location>
</feature>
<feature type="active site" evidence="1">
    <location>
        <position position="134"/>
    </location>
</feature>
<name>HIS6_METST</name>
<keyword id="KW-0028">Amino-acid biosynthesis</keyword>
<keyword id="KW-0963">Cytoplasm</keyword>
<keyword id="KW-0368">Histidine biosynthesis</keyword>
<keyword id="KW-0456">Lyase</keyword>
<keyword id="KW-1185">Reference proteome</keyword>
<protein>
    <recommendedName>
        <fullName evidence="1">Imidazole glycerol phosphate synthase subunit HisF</fullName>
        <ecNumber evidence="1">4.3.2.10</ecNumber>
    </recommendedName>
    <alternativeName>
        <fullName evidence="1">IGP synthase cyclase subunit</fullName>
    </alternativeName>
    <alternativeName>
        <fullName evidence="1">IGP synthase subunit HisF</fullName>
    </alternativeName>
    <alternativeName>
        <fullName evidence="1">ImGP synthase subunit HisF</fullName>
        <shortName evidence="1">IGPS subunit HisF</shortName>
    </alternativeName>
</protein>
<gene>
    <name evidence="1" type="primary">hisF</name>
    <name type="ordered locus">Msp_0032</name>
</gene>
<comment type="function">
    <text evidence="1">IGPS catalyzes the conversion of PRFAR and glutamine to IGP, AICAR and glutamate. The HisF subunit catalyzes the cyclization activity that produces IGP and AICAR from PRFAR using the ammonia provided by the HisH subunit.</text>
</comment>
<comment type="catalytic activity">
    <reaction evidence="1">
        <text>5-[(5-phospho-1-deoxy-D-ribulos-1-ylimino)methylamino]-1-(5-phospho-beta-D-ribosyl)imidazole-4-carboxamide + L-glutamine = D-erythro-1-(imidazol-4-yl)glycerol 3-phosphate + 5-amino-1-(5-phospho-beta-D-ribosyl)imidazole-4-carboxamide + L-glutamate + H(+)</text>
        <dbReference type="Rhea" id="RHEA:24793"/>
        <dbReference type="ChEBI" id="CHEBI:15378"/>
        <dbReference type="ChEBI" id="CHEBI:29985"/>
        <dbReference type="ChEBI" id="CHEBI:58278"/>
        <dbReference type="ChEBI" id="CHEBI:58359"/>
        <dbReference type="ChEBI" id="CHEBI:58475"/>
        <dbReference type="ChEBI" id="CHEBI:58525"/>
        <dbReference type="EC" id="4.3.2.10"/>
    </reaction>
</comment>
<comment type="pathway">
    <text evidence="1">Amino-acid biosynthesis; L-histidine biosynthesis; L-histidine from 5-phospho-alpha-D-ribose 1-diphosphate: step 5/9.</text>
</comment>
<comment type="subunit">
    <text evidence="1">Heterodimer of HisH and HisF.</text>
</comment>
<comment type="subcellular location">
    <subcellularLocation>
        <location evidence="1">Cytoplasm</location>
    </subcellularLocation>
</comment>
<comment type="similarity">
    <text evidence="1">Belongs to the HisA/HisF family.</text>
</comment>
<accession>Q2NI84</accession>
<organism>
    <name type="scientific">Methanosphaera stadtmanae (strain ATCC 43021 / DSM 3091 / JCM 11832 / MCB-3)</name>
    <dbReference type="NCBI Taxonomy" id="339860"/>
    <lineage>
        <taxon>Archaea</taxon>
        <taxon>Methanobacteriati</taxon>
        <taxon>Methanobacteriota</taxon>
        <taxon>Methanomada group</taxon>
        <taxon>Methanobacteria</taxon>
        <taxon>Methanobacteriales</taxon>
        <taxon>Methanobacteriaceae</taxon>
        <taxon>Methanosphaera</taxon>
    </lineage>
</organism>
<dbReference type="EC" id="4.3.2.10" evidence="1"/>
<dbReference type="EMBL" id="CP000102">
    <property type="protein sequence ID" value="ABC56451.1"/>
    <property type="molecule type" value="Genomic_DNA"/>
</dbReference>
<dbReference type="RefSeq" id="WP_011405650.1">
    <property type="nucleotide sequence ID" value="NC_007681.1"/>
</dbReference>
<dbReference type="SMR" id="Q2NI84"/>
<dbReference type="STRING" id="339860.Msp_0032"/>
<dbReference type="GeneID" id="41324604"/>
<dbReference type="KEGG" id="mst:Msp_0032"/>
<dbReference type="eggNOG" id="arCOG00617">
    <property type="taxonomic scope" value="Archaea"/>
</dbReference>
<dbReference type="HOGENOM" id="CLU_048577_4_0_2"/>
<dbReference type="OrthoDB" id="6261at2157"/>
<dbReference type="UniPathway" id="UPA00031">
    <property type="reaction ID" value="UER00010"/>
</dbReference>
<dbReference type="Proteomes" id="UP000001931">
    <property type="component" value="Chromosome"/>
</dbReference>
<dbReference type="GO" id="GO:0005737">
    <property type="term" value="C:cytoplasm"/>
    <property type="evidence" value="ECO:0007669"/>
    <property type="project" value="UniProtKB-SubCell"/>
</dbReference>
<dbReference type="GO" id="GO:0000107">
    <property type="term" value="F:imidazoleglycerol-phosphate synthase activity"/>
    <property type="evidence" value="ECO:0007669"/>
    <property type="project" value="UniProtKB-UniRule"/>
</dbReference>
<dbReference type="GO" id="GO:0016829">
    <property type="term" value="F:lyase activity"/>
    <property type="evidence" value="ECO:0007669"/>
    <property type="project" value="UniProtKB-KW"/>
</dbReference>
<dbReference type="GO" id="GO:0000105">
    <property type="term" value="P:L-histidine biosynthetic process"/>
    <property type="evidence" value="ECO:0007669"/>
    <property type="project" value="UniProtKB-UniRule"/>
</dbReference>
<dbReference type="CDD" id="cd04731">
    <property type="entry name" value="HisF"/>
    <property type="match status" value="1"/>
</dbReference>
<dbReference type="Gene3D" id="3.20.20.70">
    <property type="entry name" value="Aldolase class I"/>
    <property type="match status" value="1"/>
</dbReference>
<dbReference type="HAMAP" id="MF_01013">
    <property type="entry name" value="HisF"/>
    <property type="match status" value="1"/>
</dbReference>
<dbReference type="InterPro" id="IPR013785">
    <property type="entry name" value="Aldolase_TIM"/>
</dbReference>
<dbReference type="InterPro" id="IPR006062">
    <property type="entry name" value="His_biosynth"/>
</dbReference>
<dbReference type="InterPro" id="IPR004651">
    <property type="entry name" value="HisF"/>
</dbReference>
<dbReference type="InterPro" id="IPR050064">
    <property type="entry name" value="IGPS_HisA/HisF"/>
</dbReference>
<dbReference type="InterPro" id="IPR011060">
    <property type="entry name" value="RibuloseP-bd_barrel"/>
</dbReference>
<dbReference type="NCBIfam" id="TIGR00735">
    <property type="entry name" value="hisF"/>
    <property type="match status" value="1"/>
</dbReference>
<dbReference type="PANTHER" id="PTHR21235:SF2">
    <property type="entry name" value="IMIDAZOLE GLYCEROL PHOSPHATE SYNTHASE HISHF"/>
    <property type="match status" value="1"/>
</dbReference>
<dbReference type="PANTHER" id="PTHR21235">
    <property type="entry name" value="IMIDAZOLE GLYCEROL PHOSPHATE SYNTHASE SUBUNIT HISF/H IGP SYNTHASE SUBUNIT HISF/H"/>
    <property type="match status" value="1"/>
</dbReference>
<dbReference type="Pfam" id="PF00977">
    <property type="entry name" value="His_biosynth"/>
    <property type="match status" value="1"/>
</dbReference>
<dbReference type="SUPFAM" id="SSF51366">
    <property type="entry name" value="Ribulose-phoshate binding barrel"/>
    <property type="match status" value="1"/>
</dbReference>